<gene>
    <name type="primary">phzB2</name>
    <name type="ordered locus">PA14_39960</name>
</gene>
<keyword id="KW-0045">Antibiotic biosynthesis</keyword>
<keyword id="KW-0597">Phosphoprotein</keyword>
<keyword id="KW-0843">Virulence</keyword>
<proteinExistence type="evidence at protein level"/>
<evidence type="ECO:0000269" key="1">
    <source>
    </source>
</evidence>
<evidence type="ECO:0000305" key="2"/>
<comment type="function">
    <text>Involved in the biosynthesis of the antibiotic phenazine, a nitrogen-containing heterocyclic molecule having important roles in virulence, competition and biological control.</text>
</comment>
<comment type="similarity">
    <text evidence="2">Belongs to the PhzA/PhzB family.</text>
</comment>
<dbReference type="EMBL" id="CP000438">
    <property type="protein sequence ID" value="ABJ11090.1"/>
    <property type="molecule type" value="Genomic_DNA"/>
</dbReference>
<dbReference type="SMR" id="Q02L47"/>
<dbReference type="iPTMnet" id="Q02L47"/>
<dbReference type="KEGG" id="pau:PA14_39960"/>
<dbReference type="PseudoCAP" id="PA14_39960"/>
<dbReference type="HOGENOM" id="CLU_141345_0_0_6"/>
<dbReference type="BioCyc" id="PAER208963:G1G74-3349-MONOMER"/>
<dbReference type="PHI-base" id="PHI:7300"/>
<dbReference type="Proteomes" id="UP000000653">
    <property type="component" value="Chromosome"/>
</dbReference>
<dbReference type="GO" id="GO:0017000">
    <property type="term" value="P:antibiotic biosynthetic process"/>
    <property type="evidence" value="ECO:0007669"/>
    <property type="project" value="UniProtKB-KW"/>
</dbReference>
<dbReference type="FunFam" id="3.10.450.50:FF:000014">
    <property type="entry name" value="Phenazine biosynthesis protein PhzB 2"/>
    <property type="match status" value="1"/>
</dbReference>
<dbReference type="Gene3D" id="3.10.450.50">
    <property type="match status" value="1"/>
</dbReference>
<dbReference type="InterPro" id="IPR032710">
    <property type="entry name" value="NTF2-like_dom_sf"/>
</dbReference>
<dbReference type="InterPro" id="IPR004964">
    <property type="entry name" value="PhzA_PhzB"/>
</dbReference>
<dbReference type="Pfam" id="PF03284">
    <property type="entry name" value="PHZA_PHZB"/>
    <property type="match status" value="1"/>
</dbReference>
<dbReference type="SUPFAM" id="SSF54427">
    <property type="entry name" value="NTF2-like"/>
    <property type="match status" value="1"/>
</dbReference>
<reference key="1">
    <citation type="journal article" date="2006" name="Genome Biol.">
        <title>Genomic analysis reveals that Pseudomonas aeruginosa virulence is combinatorial.</title>
        <authorList>
            <person name="Lee D.G."/>
            <person name="Urbach J.M."/>
            <person name="Wu G."/>
            <person name="Liberati N.T."/>
            <person name="Feinbaum R.L."/>
            <person name="Miyata S."/>
            <person name="Diggins L.T."/>
            <person name="He J."/>
            <person name="Saucier M."/>
            <person name="Deziel E."/>
            <person name="Friedman L."/>
            <person name="Li L."/>
            <person name="Grills G."/>
            <person name="Montgomery K."/>
            <person name="Kucherlapati R."/>
            <person name="Rahme L.G."/>
            <person name="Ausubel F.M."/>
        </authorList>
    </citation>
    <scope>NUCLEOTIDE SEQUENCE [LARGE SCALE GENOMIC DNA]</scope>
    <source>
        <strain>UCBPP-PA14</strain>
    </source>
</reference>
<reference key="2">
    <citation type="journal article" date="2014" name="Anal. Bioanal. Chem.">
        <title>Potential of liquid-isoelectric-focusing protein fractionation to improve phosphoprotein characterization of Pseudomonas aeruginosa PA14.</title>
        <authorList>
            <person name="Ouidir T."/>
            <person name="Jarnier F."/>
            <person name="Cosette P."/>
            <person name="Jouenne T."/>
            <person name="Hardouin J."/>
        </authorList>
    </citation>
    <scope>IDENTIFICATION BY MASS SPECTROMETRY</scope>
    <scope>PHOSPHORYLATION AT THR-91</scope>
    <source>
        <strain>UCBPP-PA14</strain>
    </source>
</reference>
<name>PHZB2_PSEAB</name>
<protein>
    <recommendedName>
        <fullName>Phenazine biosynthesis protein PhzB 2</fullName>
    </recommendedName>
</protein>
<feature type="chain" id="PRO_0000431476" description="Phenazine biosynthesis protein PhzB 2">
    <location>
        <begin position="1"/>
        <end position="162"/>
    </location>
</feature>
<feature type="modified residue" description="Phosphothreonine" evidence="1">
    <location>
        <position position="91"/>
    </location>
</feature>
<accession>Q02L47</accession>
<organism>
    <name type="scientific">Pseudomonas aeruginosa (strain UCBPP-PA14)</name>
    <dbReference type="NCBI Taxonomy" id="208963"/>
    <lineage>
        <taxon>Bacteria</taxon>
        <taxon>Pseudomonadati</taxon>
        <taxon>Pseudomonadota</taxon>
        <taxon>Gammaproteobacteria</taxon>
        <taxon>Pseudomonadales</taxon>
        <taxon>Pseudomonadaceae</taxon>
        <taxon>Pseudomonas</taxon>
    </lineage>
</organism>
<sequence length="162" mass="19028">MLDNAIPQGFEDAVELRRKNRETVVKYMNTKGQDRLRRHELFVEDGCGGLWTTDTGSPIVIRGKDKLAEHAVWSLKCFPDWEWYNIKVFETDDPNHFWVECDGHGKILFPGYPEGYYENHFLHSFELDDGKIKRNREFMNVFQQLRALSIPVPQIKREGIPT</sequence>